<protein>
    <recommendedName>
        <fullName evidence="1">Uracil-DNA glycosylase</fullName>
        <shortName evidence="1">UDG</shortName>
        <ecNumber evidence="1">3.2.2.27</ecNumber>
    </recommendedName>
</protein>
<keyword id="KW-0963">Cytoplasm</keyword>
<keyword id="KW-0227">DNA damage</keyword>
<keyword id="KW-0234">DNA repair</keyword>
<keyword id="KW-0378">Hydrolase</keyword>
<comment type="function">
    <text evidence="1">Excises uracil residues from the DNA which can arise as a result of misincorporation of dUMP residues by DNA polymerase or due to deamination of cytosine.</text>
</comment>
<comment type="catalytic activity">
    <reaction evidence="1">
        <text>Hydrolyzes single-stranded DNA or mismatched double-stranded DNA and polynucleotides, releasing free uracil.</text>
        <dbReference type="EC" id="3.2.2.27"/>
    </reaction>
</comment>
<comment type="subcellular location">
    <subcellularLocation>
        <location evidence="1">Cytoplasm</location>
    </subcellularLocation>
</comment>
<comment type="similarity">
    <text evidence="1">Belongs to the uracil-DNA glycosylase (UDG) superfamily. UNG family.</text>
</comment>
<name>UNG_PSEAB</name>
<evidence type="ECO:0000255" key="1">
    <source>
        <dbReference type="HAMAP-Rule" id="MF_00148"/>
    </source>
</evidence>
<accession>Q02HQ1</accession>
<proteinExistence type="inferred from homology"/>
<sequence>MTDNDDRIKLEASWKEALREEFDKPYMKQLGEFLRQEKAAGKAIFPPGPLIFNALNTTPLENVKVVIIGQDPYHGPGQAHGLCFSVQPGVPTPPSLQNIYKELNRDLNIPIPNNGYLQRWAEQGVLLLNTSLTVEQAKAGSHANAGWQPFTDRVIEVVNERCERLVFLLWGSHAQSKQKLIDPQRHLILKSAHPSPLSAYRGFLGNGHFSRTNKFLEQNGKTPIDWSLPDL</sequence>
<dbReference type="EC" id="3.2.2.27" evidence="1"/>
<dbReference type="EMBL" id="CP000438">
    <property type="protein sequence ID" value="ABJ09901.1"/>
    <property type="molecule type" value="Genomic_DNA"/>
</dbReference>
<dbReference type="RefSeq" id="WP_003085510.1">
    <property type="nucleotide sequence ID" value="NZ_CP034244.1"/>
</dbReference>
<dbReference type="SMR" id="Q02HQ1"/>
<dbReference type="KEGG" id="pau:PA14_54590"/>
<dbReference type="PseudoCAP" id="PA14_54590"/>
<dbReference type="HOGENOM" id="CLU_032162_3_1_6"/>
<dbReference type="BioCyc" id="PAER208963:G1G74-4595-MONOMER"/>
<dbReference type="Proteomes" id="UP000000653">
    <property type="component" value="Chromosome"/>
</dbReference>
<dbReference type="GO" id="GO:0005737">
    <property type="term" value="C:cytoplasm"/>
    <property type="evidence" value="ECO:0007669"/>
    <property type="project" value="UniProtKB-SubCell"/>
</dbReference>
<dbReference type="GO" id="GO:0004844">
    <property type="term" value="F:uracil DNA N-glycosylase activity"/>
    <property type="evidence" value="ECO:0007669"/>
    <property type="project" value="UniProtKB-UniRule"/>
</dbReference>
<dbReference type="GO" id="GO:0097510">
    <property type="term" value="P:base-excision repair, AP site formation via deaminated base removal"/>
    <property type="evidence" value="ECO:0007669"/>
    <property type="project" value="TreeGrafter"/>
</dbReference>
<dbReference type="CDD" id="cd10027">
    <property type="entry name" value="UDG-F1-like"/>
    <property type="match status" value="1"/>
</dbReference>
<dbReference type="FunFam" id="3.40.470.10:FF:000001">
    <property type="entry name" value="Uracil-DNA glycosylase"/>
    <property type="match status" value="1"/>
</dbReference>
<dbReference type="Gene3D" id="3.40.470.10">
    <property type="entry name" value="Uracil-DNA glycosylase-like domain"/>
    <property type="match status" value="1"/>
</dbReference>
<dbReference type="HAMAP" id="MF_00148">
    <property type="entry name" value="UDG"/>
    <property type="match status" value="1"/>
</dbReference>
<dbReference type="InterPro" id="IPR002043">
    <property type="entry name" value="UDG_fam1"/>
</dbReference>
<dbReference type="InterPro" id="IPR018085">
    <property type="entry name" value="Ura-DNA_Glyclase_AS"/>
</dbReference>
<dbReference type="InterPro" id="IPR005122">
    <property type="entry name" value="Uracil-DNA_glycosylase-like"/>
</dbReference>
<dbReference type="InterPro" id="IPR036895">
    <property type="entry name" value="Uracil-DNA_glycosylase-like_sf"/>
</dbReference>
<dbReference type="NCBIfam" id="NF003588">
    <property type="entry name" value="PRK05254.1-1"/>
    <property type="match status" value="1"/>
</dbReference>
<dbReference type="NCBIfam" id="NF003589">
    <property type="entry name" value="PRK05254.1-2"/>
    <property type="match status" value="1"/>
</dbReference>
<dbReference type="NCBIfam" id="NF003591">
    <property type="entry name" value="PRK05254.1-4"/>
    <property type="match status" value="1"/>
</dbReference>
<dbReference type="NCBIfam" id="NF003592">
    <property type="entry name" value="PRK05254.1-5"/>
    <property type="match status" value="1"/>
</dbReference>
<dbReference type="NCBIfam" id="TIGR00628">
    <property type="entry name" value="ung"/>
    <property type="match status" value="1"/>
</dbReference>
<dbReference type="PANTHER" id="PTHR11264">
    <property type="entry name" value="URACIL-DNA GLYCOSYLASE"/>
    <property type="match status" value="1"/>
</dbReference>
<dbReference type="PANTHER" id="PTHR11264:SF0">
    <property type="entry name" value="URACIL-DNA GLYCOSYLASE"/>
    <property type="match status" value="1"/>
</dbReference>
<dbReference type="Pfam" id="PF03167">
    <property type="entry name" value="UDG"/>
    <property type="match status" value="1"/>
</dbReference>
<dbReference type="SMART" id="SM00986">
    <property type="entry name" value="UDG"/>
    <property type="match status" value="1"/>
</dbReference>
<dbReference type="SMART" id="SM00987">
    <property type="entry name" value="UreE_C"/>
    <property type="match status" value="1"/>
</dbReference>
<dbReference type="SUPFAM" id="SSF52141">
    <property type="entry name" value="Uracil-DNA glycosylase-like"/>
    <property type="match status" value="1"/>
</dbReference>
<dbReference type="PROSITE" id="PS00130">
    <property type="entry name" value="U_DNA_GLYCOSYLASE"/>
    <property type="match status" value="1"/>
</dbReference>
<reference key="1">
    <citation type="journal article" date="2006" name="Genome Biol.">
        <title>Genomic analysis reveals that Pseudomonas aeruginosa virulence is combinatorial.</title>
        <authorList>
            <person name="Lee D.G."/>
            <person name="Urbach J.M."/>
            <person name="Wu G."/>
            <person name="Liberati N.T."/>
            <person name="Feinbaum R.L."/>
            <person name="Miyata S."/>
            <person name="Diggins L.T."/>
            <person name="He J."/>
            <person name="Saucier M."/>
            <person name="Deziel E."/>
            <person name="Friedman L."/>
            <person name="Li L."/>
            <person name="Grills G."/>
            <person name="Montgomery K."/>
            <person name="Kucherlapati R."/>
            <person name="Rahme L.G."/>
            <person name="Ausubel F.M."/>
        </authorList>
    </citation>
    <scope>NUCLEOTIDE SEQUENCE [LARGE SCALE GENOMIC DNA]</scope>
    <source>
        <strain>UCBPP-PA14</strain>
    </source>
</reference>
<organism>
    <name type="scientific">Pseudomonas aeruginosa (strain UCBPP-PA14)</name>
    <dbReference type="NCBI Taxonomy" id="208963"/>
    <lineage>
        <taxon>Bacteria</taxon>
        <taxon>Pseudomonadati</taxon>
        <taxon>Pseudomonadota</taxon>
        <taxon>Gammaproteobacteria</taxon>
        <taxon>Pseudomonadales</taxon>
        <taxon>Pseudomonadaceae</taxon>
        <taxon>Pseudomonas</taxon>
    </lineage>
</organism>
<gene>
    <name evidence="1" type="primary">ung</name>
    <name type="ordered locus">PA14_54590</name>
</gene>
<feature type="chain" id="PRO_1000009927" description="Uracil-DNA glycosylase">
    <location>
        <begin position="1"/>
        <end position="231"/>
    </location>
</feature>
<feature type="active site" description="Proton acceptor" evidence="1">
    <location>
        <position position="71"/>
    </location>
</feature>